<evidence type="ECO:0000255" key="1">
    <source>
        <dbReference type="HAMAP-Rule" id="MF_00522"/>
    </source>
</evidence>
<gene>
    <name evidence="1" type="primary">psaJ</name>
</gene>
<reference key="1">
    <citation type="journal article" date="2008" name="Nucleic Acids Res.">
        <title>The complete nucleotide sequences of the five genetically distinct plastid genomes of Oenothera, subsection Oenothera: I. Sequence evaluation and plastome evolution.</title>
        <authorList>
            <person name="Greiner S."/>
            <person name="Wang X."/>
            <person name="Rauwolf U."/>
            <person name="Silber M.V."/>
            <person name="Mayer K."/>
            <person name="Meurer J."/>
            <person name="Haberer G."/>
            <person name="Herrmann R.G."/>
        </authorList>
    </citation>
    <scope>NUCLEOTIDE SEQUENCE [LARGE SCALE GENOMIC DNA]</scope>
    <source>
        <strain>cv. Rr-lamarckiana Sweden</strain>
    </source>
</reference>
<protein>
    <recommendedName>
        <fullName evidence="1">Photosystem I reaction center subunit IX</fullName>
    </recommendedName>
    <alternativeName>
        <fullName evidence="1">PSI-J</fullName>
    </alternativeName>
</protein>
<feature type="chain" id="PRO_0000354164" description="Photosystem I reaction center subunit IX">
    <location>
        <begin position="1"/>
        <end position="43"/>
    </location>
</feature>
<feature type="transmembrane region" description="Helical" evidence="1">
    <location>
        <begin position="7"/>
        <end position="27"/>
    </location>
</feature>
<geneLocation type="chloroplast"/>
<name>PSAJ_OENGL</name>
<comment type="function">
    <text evidence="1">May help in the organization of the PsaE and PsaF subunits.</text>
</comment>
<comment type="subcellular location">
    <subcellularLocation>
        <location evidence="1">Plastid</location>
        <location evidence="1">Chloroplast thylakoid membrane</location>
        <topology evidence="1">Single-pass membrane protein</topology>
    </subcellularLocation>
</comment>
<comment type="similarity">
    <text evidence="1">Belongs to the PsaJ family.</text>
</comment>
<sequence>MRDLKTYLSVAPVLSALWFGALAGLLIEINRFFPDALTFPFFS</sequence>
<organism>
    <name type="scientific">Oenothera glazioviana</name>
    <name type="common">Large-flowered evening primrose</name>
    <name type="synonym">Oenothera erythrosepala</name>
    <dbReference type="NCBI Taxonomy" id="482428"/>
    <lineage>
        <taxon>Eukaryota</taxon>
        <taxon>Viridiplantae</taxon>
        <taxon>Streptophyta</taxon>
        <taxon>Embryophyta</taxon>
        <taxon>Tracheophyta</taxon>
        <taxon>Spermatophyta</taxon>
        <taxon>Magnoliopsida</taxon>
        <taxon>eudicotyledons</taxon>
        <taxon>Gunneridae</taxon>
        <taxon>Pentapetalae</taxon>
        <taxon>rosids</taxon>
        <taxon>malvids</taxon>
        <taxon>Myrtales</taxon>
        <taxon>Onagraceae</taxon>
        <taxon>Onagroideae</taxon>
        <taxon>Onagreae</taxon>
        <taxon>Oenothera</taxon>
    </lineage>
</organism>
<accession>B0Z564</accession>
<proteinExistence type="inferred from homology"/>
<keyword id="KW-0150">Chloroplast</keyword>
<keyword id="KW-0472">Membrane</keyword>
<keyword id="KW-0602">Photosynthesis</keyword>
<keyword id="KW-0603">Photosystem I</keyword>
<keyword id="KW-0934">Plastid</keyword>
<keyword id="KW-0793">Thylakoid</keyword>
<keyword id="KW-0812">Transmembrane</keyword>
<keyword id="KW-1133">Transmembrane helix</keyword>
<dbReference type="EMBL" id="EU262890">
    <property type="protein sequence ID" value="ABX10057.1"/>
    <property type="molecule type" value="Genomic_DNA"/>
</dbReference>
<dbReference type="RefSeq" id="YP_001687303.1">
    <property type="nucleotide sequence ID" value="NC_010360.2"/>
</dbReference>
<dbReference type="SMR" id="B0Z564"/>
<dbReference type="GeneID" id="5955340"/>
<dbReference type="GO" id="GO:0009535">
    <property type="term" value="C:chloroplast thylakoid membrane"/>
    <property type="evidence" value="ECO:0007669"/>
    <property type="project" value="UniProtKB-SubCell"/>
</dbReference>
<dbReference type="GO" id="GO:0009522">
    <property type="term" value="C:photosystem I"/>
    <property type="evidence" value="ECO:0007669"/>
    <property type="project" value="UniProtKB-KW"/>
</dbReference>
<dbReference type="GO" id="GO:0015979">
    <property type="term" value="P:photosynthesis"/>
    <property type="evidence" value="ECO:0007669"/>
    <property type="project" value="UniProtKB-UniRule"/>
</dbReference>
<dbReference type="FunFam" id="1.20.5.510:FF:000001">
    <property type="entry name" value="Photosystem I reaction center subunit IX"/>
    <property type="match status" value="1"/>
</dbReference>
<dbReference type="Gene3D" id="1.20.5.510">
    <property type="entry name" value="Single helix bin"/>
    <property type="match status" value="1"/>
</dbReference>
<dbReference type="HAMAP" id="MF_00522">
    <property type="entry name" value="PSI_PsaJ"/>
    <property type="match status" value="1"/>
</dbReference>
<dbReference type="InterPro" id="IPR002615">
    <property type="entry name" value="PSI_PsaJ"/>
</dbReference>
<dbReference type="InterPro" id="IPR036062">
    <property type="entry name" value="PSI_PsaJ_sf"/>
</dbReference>
<dbReference type="PANTHER" id="PTHR36082">
    <property type="match status" value="1"/>
</dbReference>
<dbReference type="PANTHER" id="PTHR36082:SF2">
    <property type="entry name" value="PHOTOSYSTEM I REACTION CENTER SUBUNIT IX"/>
    <property type="match status" value="1"/>
</dbReference>
<dbReference type="Pfam" id="PF01701">
    <property type="entry name" value="PSI_PsaJ"/>
    <property type="match status" value="1"/>
</dbReference>
<dbReference type="SUPFAM" id="SSF81544">
    <property type="entry name" value="Subunit IX of photosystem I reaction centre, PsaJ"/>
    <property type="match status" value="1"/>
</dbReference>